<organism>
    <name type="scientific">Haemophilus ducreyi (strain 35000HP / ATCC 700724)</name>
    <dbReference type="NCBI Taxonomy" id="233412"/>
    <lineage>
        <taxon>Bacteria</taxon>
        <taxon>Pseudomonadati</taxon>
        <taxon>Pseudomonadota</taxon>
        <taxon>Gammaproteobacteria</taxon>
        <taxon>Pasteurellales</taxon>
        <taxon>Pasteurellaceae</taxon>
        <taxon>Haemophilus</taxon>
    </lineage>
</organism>
<protein>
    <recommendedName>
        <fullName evidence="1">Pantothenate kinase</fullName>
        <ecNumber evidence="1">2.7.1.33</ecNumber>
    </recommendedName>
    <alternativeName>
        <fullName evidence="1">Pantothenic acid kinase</fullName>
    </alternativeName>
</protein>
<gene>
    <name evidence="1" type="primary">coaA</name>
    <name type="ordered locus">HD_0056</name>
</gene>
<evidence type="ECO:0000255" key="1">
    <source>
        <dbReference type="HAMAP-Rule" id="MF_00215"/>
    </source>
</evidence>
<name>COAA_HAEDU</name>
<keyword id="KW-0067">ATP-binding</keyword>
<keyword id="KW-0173">Coenzyme A biosynthesis</keyword>
<keyword id="KW-0963">Cytoplasm</keyword>
<keyword id="KW-0418">Kinase</keyword>
<keyword id="KW-0547">Nucleotide-binding</keyword>
<keyword id="KW-1185">Reference proteome</keyword>
<keyword id="KW-0808">Transferase</keyword>
<dbReference type="EC" id="2.7.1.33" evidence="1"/>
<dbReference type="EMBL" id="AE017143">
    <property type="protein sequence ID" value="AAP95071.1"/>
    <property type="molecule type" value="Genomic_DNA"/>
</dbReference>
<dbReference type="RefSeq" id="WP_010944125.1">
    <property type="nucleotide sequence ID" value="NC_002940.2"/>
</dbReference>
<dbReference type="SMR" id="Q7VPK9"/>
<dbReference type="STRING" id="233412.HD_0056"/>
<dbReference type="KEGG" id="hdu:HD_0056"/>
<dbReference type="eggNOG" id="COG1072">
    <property type="taxonomic scope" value="Bacteria"/>
</dbReference>
<dbReference type="HOGENOM" id="CLU_053818_1_1_6"/>
<dbReference type="OrthoDB" id="1550976at2"/>
<dbReference type="UniPathway" id="UPA00241">
    <property type="reaction ID" value="UER00352"/>
</dbReference>
<dbReference type="Proteomes" id="UP000001022">
    <property type="component" value="Chromosome"/>
</dbReference>
<dbReference type="GO" id="GO:0005737">
    <property type="term" value="C:cytoplasm"/>
    <property type="evidence" value="ECO:0007669"/>
    <property type="project" value="UniProtKB-SubCell"/>
</dbReference>
<dbReference type="GO" id="GO:0005524">
    <property type="term" value="F:ATP binding"/>
    <property type="evidence" value="ECO:0007669"/>
    <property type="project" value="UniProtKB-UniRule"/>
</dbReference>
<dbReference type="GO" id="GO:0004594">
    <property type="term" value="F:pantothenate kinase activity"/>
    <property type="evidence" value="ECO:0007669"/>
    <property type="project" value="UniProtKB-UniRule"/>
</dbReference>
<dbReference type="GO" id="GO:0015937">
    <property type="term" value="P:coenzyme A biosynthetic process"/>
    <property type="evidence" value="ECO:0007669"/>
    <property type="project" value="UniProtKB-UniRule"/>
</dbReference>
<dbReference type="CDD" id="cd02025">
    <property type="entry name" value="PanK"/>
    <property type="match status" value="1"/>
</dbReference>
<dbReference type="FunFam" id="3.40.50.300:FF:000242">
    <property type="entry name" value="Pantothenate kinase"/>
    <property type="match status" value="1"/>
</dbReference>
<dbReference type="Gene3D" id="3.40.50.300">
    <property type="entry name" value="P-loop containing nucleotide triphosphate hydrolases"/>
    <property type="match status" value="1"/>
</dbReference>
<dbReference type="HAMAP" id="MF_00215">
    <property type="entry name" value="Pantothen_kinase_1"/>
    <property type="match status" value="1"/>
</dbReference>
<dbReference type="InterPro" id="IPR027417">
    <property type="entry name" value="P-loop_NTPase"/>
</dbReference>
<dbReference type="InterPro" id="IPR004566">
    <property type="entry name" value="PanK"/>
</dbReference>
<dbReference type="InterPro" id="IPR006083">
    <property type="entry name" value="PRK/URK"/>
</dbReference>
<dbReference type="NCBIfam" id="TIGR00554">
    <property type="entry name" value="panK_bact"/>
    <property type="match status" value="1"/>
</dbReference>
<dbReference type="PANTHER" id="PTHR10285">
    <property type="entry name" value="URIDINE KINASE"/>
    <property type="match status" value="1"/>
</dbReference>
<dbReference type="Pfam" id="PF00485">
    <property type="entry name" value="PRK"/>
    <property type="match status" value="1"/>
</dbReference>
<dbReference type="PIRSF" id="PIRSF000545">
    <property type="entry name" value="Pantothenate_kin"/>
    <property type="match status" value="1"/>
</dbReference>
<dbReference type="SUPFAM" id="SSF52540">
    <property type="entry name" value="P-loop containing nucleoside triphosphate hydrolases"/>
    <property type="match status" value="1"/>
</dbReference>
<feature type="chain" id="PRO_0000194430" description="Pantothenate kinase">
    <location>
        <begin position="1"/>
        <end position="316"/>
    </location>
</feature>
<feature type="binding site" evidence="1">
    <location>
        <begin position="95"/>
        <end position="102"/>
    </location>
    <ligand>
        <name>ATP</name>
        <dbReference type="ChEBI" id="CHEBI:30616"/>
    </ligand>
</feature>
<accession>Q7VPK9</accession>
<comment type="catalytic activity">
    <reaction evidence="1">
        <text>(R)-pantothenate + ATP = (R)-4'-phosphopantothenate + ADP + H(+)</text>
        <dbReference type="Rhea" id="RHEA:16373"/>
        <dbReference type="ChEBI" id="CHEBI:10986"/>
        <dbReference type="ChEBI" id="CHEBI:15378"/>
        <dbReference type="ChEBI" id="CHEBI:29032"/>
        <dbReference type="ChEBI" id="CHEBI:30616"/>
        <dbReference type="ChEBI" id="CHEBI:456216"/>
        <dbReference type="EC" id="2.7.1.33"/>
    </reaction>
</comment>
<comment type="pathway">
    <text evidence="1">Cofactor biosynthesis; coenzyme A biosynthesis; CoA from (R)-pantothenate: step 1/5.</text>
</comment>
<comment type="subcellular location">
    <subcellularLocation>
        <location evidence="1">Cytoplasm</location>
    </subcellularLocation>
</comment>
<comment type="similarity">
    <text evidence="1">Belongs to the prokaryotic pantothenate kinase family.</text>
</comment>
<proteinExistence type="inferred from homology"/>
<reference key="1">
    <citation type="submission" date="2003-06" db="EMBL/GenBank/DDBJ databases">
        <title>The complete genome sequence of Haemophilus ducreyi.</title>
        <authorList>
            <person name="Munson R.S. Jr."/>
            <person name="Ray W.C."/>
            <person name="Mahairas G."/>
            <person name="Sabo P."/>
            <person name="Mungur R."/>
            <person name="Johnson L."/>
            <person name="Nguyen D."/>
            <person name="Wang J."/>
            <person name="Forst C."/>
            <person name="Hood L."/>
        </authorList>
    </citation>
    <scope>NUCLEOTIDE SEQUENCE [LARGE SCALE GENOMIC DNA]</scope>
    <source>
        <strain>35000HP / ATCC 700724</strain>
    </source>
</reference>
<sequence>MGLQTTKKITPFLTFDRQQWAKLRKSVPLKLTEQDLKPLLSFNEELSLEEVSTIYLPLARLINYYIEENIKRQTVLHRFLGVKSPKVPYIISLAGSVSVGKSTSARILQALLCQWPVERKVDLITTDGFLYPLAILQAKNLLNRKGFPESYDIHRLIKFVSDLKSGERNIKAPIYSHLTYDIIPDRYSVVDQPEIVILEGLNVLQSGMNYPSSPHNVFVSDFVDFSIYVDADEALLKSWYIHRFLKFRCSAFSDPNSYFHHYAKLSEEQAVKTATTIWDEINGLNLKQNIVPSRERADLILVKGEDHAIQTVKLRK</sequence>